<gene>
    <name type="primary">bglI</name>
    <name type="ORF">AO090701000244</name>
</gene>
<proteinExistence type="inferred from homology"/>
<organism>
    <name type="scientific">Aspergillus oryzae (strain ATCC 42149 / RIB 40)</name>
    <name type="common">Yellow koji mold</name>
    <dbReference type="NCBI Taxonomy" id="510516"/>
    <lineage>
        <taxon>Eukaryota</taxon>
        <taxon>Fungi</taxon>
        <taxon>Dikarya</taxon>
        <taxon>Ascomycota</taxon>
        <taxon>Pezizomycotina</taxon>
        <taxon>Eurotiomycetes</taxon>
        <taxon>Eurotiomycetidae</taxon>
        <taxon>Eurotiales</taxon>
        <taxon>Aspergillaceae</taxon>
        <taxon>Aspergillus</taxon>
        <taxon>Aspergillus subgen. Circumdati</taxon>
    </lineage>
</organism>
<name>BGLI_ASPOR</name>
<sequence>MPRLDVEKTIEELSLGEKVALTAGIDFWHTASVPRLNIPTLRMSDGPNGVRGTRFFNGVPAACFPCATALGATWDTELLHEIGQLMGEESIAKGSHIILGPTINTQRSPLGGRGFESFAEDGVLSGLLAGYISKGIQEKGVAATLKHFVCNDQEHQRMAVDSIVTQRALREIYLLPFQLAMRICRTACVMTAYNKVNGTHVSQNKEIITDILRKEWGWDGLVMSDWFGTYSTSDAINAGLDLEMPGKTRWRGTALAHAVSSNEVAEFVMDERVRNVLNLVNFVDGLNIPENAPEKALNRPQDQALLRRAAAESVVLMKNEEDILPLKKEKSILVIGPNSKVAAYCGGGSASLDAYYTVTPFEGVSAQSKGEVKFSQGVYSHKDLPLLGPLLKTADGKTGFSFKVYNEHPSESNRELIEQLHLVSSSGFLMDYVNPKIKSLTYYVDMEGLFTPEEDGVYDFGVTVVGTGQLFIDGELVVDNTKNQRQGSAFFGSATVEEKGSKELKAGQTYKVLFQFGTAPTSDLDTRGVVVFGPGGFRFGASRRVGQEELISNAVKLASEAEQVVVFAGLTSEWETEGYDRDHMDLPPGSDEMISRVLDVNPNAVVVIQSGTPVTMPWANKTKALLHAWFGGNECGNGIADVLYGDVNPSGKLPITFPVRLQDNPSYVNFRSERGRVLYGEDVYVGYRYYEKVDLAPLFPFGHGLSYTTFTRSDLTLTTTPEKPQYEESGEPITATVTVTNTGKVAGAEIVQLWVAPPATEVNRPVRELKGFTKVFLQPGEQKKVEIVVEKKLATSWFDEMREKWASEKGEYEVLVTGTGEGVLKSSFKVEKTRYWLGL</sequence>
<reference key="1">
    <citation type="journal article" date="2005" name="Nature">
        <title>Genome sequencing and analysis of Aspergillus oryzae.</title>
        <authorList>
            <person name="Machida M."/>
            <person name="Asai K."/>
            <person name="Sano M."/>
            <person name="Tanaka T."/>
            <person name="Kumagai T."/>
            <person name="Terai G."/>
            <person name="Kusumoto K."/>
            <person name="Arima T."/>
            <person name="Akita O."/>
            <person name="Kashiwagi Y."/>
            <person name="Abe K."/>
            <person name="Gomi K."/>
            <person name="Horiuchi H."/>
            <person name="Kitamoto K."/>
            <person name="Kobayashi T."/>
            <person name="Takeuchi M."/>
            <person name="Denning D.W."/>
            <person name="Galagan J.E."/>
            <person name="Nierman W.C."/>
            <person name="Yu J."/>
            <person name="Archer D.B."/>
            <person name="Bennett J.W."/>
            <person name="Bhatnagar D."/>
            <person name="Cleveland T.E."/>
            <person name="Fedorova N.D."/>
            <person name="Gotoh O."/>
            <person name="Horikawa H."/>
            <person name="Hosoyama A."/>
            <person name="Ichinomiya M."/>
            <person name="Igarashi R."/>
            <person name="Iwashita K."/>
            <person name="Juvvadi P.R."/>
            <person name="Kato M."/>
            <person name="Kato Y."/>
            <person name="Kin T."/>
            <person name="Kokubun A."/>
            <person name="Maeda H."/>
            <person name="Maeyama N."/>
            <person name="Maruyama J."/>
            <person name="Nagasaki H."/>
            <person name="Nakajima T."/>
            <person name="Oda K."/>
            <person name="Okada K."/>
            <person name="Paulsen I."/>
            <person name="Sakamoto K."/>
            <person name="Sawano T."/>
            <person name="Takahashi M."/>
            <person name="Takase K."/>
            <person name="Terabayashi Y."/>
            <person name="Wortman J.R."/>
            <person name="Yamada O."/>
            <person name="Yamagata Y."/>
            <person name="Anazawa H."/>
            <person name="Hata Y."/>
            <person name="Koide Y."/>
            <person name="Komori T."/>
            <person name="Koyama Y."/>
            <person name="Minetoki T."/>
            <person name="Suharnan S."/>
            <person name="Tanaka A."/>
            <person name="Isono K."/>
            <person name="Kuhara S."/>
            <person name="Ogasawara N."/>
            <person name="Kikuchi H."/>
        </authorList>
    </citation>
    <scope>NUCLEOTIDE SEQUENCE [LARGE SCALE GENOMIC DNA]</scope>
    <source>
        <strain>ATCC 42149 / RIB 40</strain>
    </source>
</reference>
<dbReference type="EC" id="3.2.1.21"/>
<dbReference type="EMBL" id="BA000053">
    <property type="protein sequence ID" value="BAE61980.1"/>
    <property type="molecule type" value="Genomic_DNA"/>
</dbReference>
<dbReference type="RefSeq" id="XP_001823113.1">
    <property type="nucleotide sequence ID" value="XM_001823061.2"/>
</dbReference>
<dbReference type="SMR" id="Q2U8Y5"/>
<dbReference type="STRING" id="510516.Q2U8Y5"/>
<dbReference type="CAZy" id="GH3">
    <property type="family name" value="Glycoside Hydrolase Family 3"/>
</dbReference>
<dbReference type="GlyCosmos" id="Q2U8Y5">
    <property type="glycosylation" value="2 sites, No reported glycans"/>
</dbReference>
<dbReference type="EnsemblFungi" id="BAE61980">
    <property type="protein sequence ID" value="BAE61980"/>
    <property type="gene ID" value="AO090701000244"/>
</dbReference>
<dbReference type="GeneID" id="5995170"/>
<dbReference type="KEGG" id="aor:AO090701000244"/>
<dbReference type="VEuPathDB" id="FungiDB:AO090701000244"/>
<dbReference type="HOGENOM" id="CLU_004542_4_0_1"/>
<dbReference type="OMA" id="QLWIVPP"/>
<dbReference type="OrthoDB" id="39310at5052"/>
<dbReference type="UniPathway" id="UPA00696"/>
<dbReference type="Proteomes" id="UP000006564">
    <property type="component" value="Chromosome 5"/>
</dbReference>
<dbReference type="GO" id="GO:0005576">
    <property type="term" value="C:extracellular region"/>
    <property type="evidence" value="ECO:0007669"/>
    <property type="project" value="UniProtKB-SubCell"/>
</dbReference>
<dbReference type="GO" id="GO:0008422">
    <property type="term" value="F:beta-glucosidase activity"/>
    <property type="evidence" value="ECO:0007669"/>
    <property type="project" value="UniProtKB-EC"/>
</dbReference>
<dbReference type="GO" id="GO:0030245">
    <property type="term" value="P:cellulose catabolic process"/>
    <property type="evidence" value="ECO:0007669"/>
    <property type="project" value="UniProtKB-UniPathway"/>
</dbReference>
<dbReference type="FunFam" id="3.20.20.300:FF:000006">
    <property type="entry name" value="Beta-glucosidase H"/>
    <property type="match status" value="1"/>
</dbReference>
<dbReference type="FunFam" id="2.60.40.10:FF:000495">
    <property type="entry name" value="Periplasmic beta-glucosidase"/>
    <property type="match status" value="1"/>
</dbReference>
<dbReference type="FunFam" id="2.60.120.260:FF:000119">
    <property type="entry name" value="Probable beta-glucosidase I"/>
    <property type="match status" value="1"/>
</dbReference>
<dbReference type="Gene3D" id="2.60.120.260">
    <property type="entry name" value="Galactose-binding domain-like"/>
    <property type="match status" value="1"/>
</dbReference>
<dbReference type="Gene3D" id="3.40.50.1700">
    <property type="entry name" value="Glycoside hydrolase family 3 C-terminal domain"/>
    <property type="match status" value="1"/>
</dbReference>
<dbReference type="Gene3D" id="3.20.20.300">
    <property type="entry name" value="Glycoside hydrolase, family 3, N-terminal domain"/>
    <property type="match status" value="1"/>
</dbReference>
<dbReference type="Gene3D" id="2.60.40.10">
    <property type="entry name" value="Immunoglobulins"/>
    <property type="match status" value="1"/>
</dbReference>
<dbReference type="InterPro" id="IPR050288">
    <property type="entry name" value="Cellulose_deg_GH3"/>
</dbReference>
<dbReference type="InterPro" id="IPR026891">
    <property type="entry name" value="Fn3-like"/>
</dbReference>
<dbReference type="InterPro" id="IPR019800">
    <property type="entry name" value="Glyco_hydro_3_AS"/>
</dbReference>
<dbReference type="InterPro" id="IPR002772">
    <property type="entry name" value="Glyco_hydro_3_C"/>
</dbReference>
<dbReference type="InterPro" id="IPR036881">
    <property type="entry name" value="Glyco_hydro_3_C_sf"/>
</dbReference>
<dbReference type="InterPro" id="IPR001764">
    <property type="entry name" value="Glyco_hydro_3_N"/>
</dbReference>
<dbReference type="InterPro" id="IPR036962">
    <property type="entry name" value="Glyco_hydro_3_N_sf"/>
</dbReference>
<dbReference type="InterPro" id="IPR017853">
    <property type="entry name" value="Glycoside_hydrolase_SF"/>
</dbReference>
<dbReference type="InterPro" id="IPR013783">
    <property type="entry name" value="Ig-like_fold"/>
</dbReference>
<dbReference type="InterPro" id="IPR037524">
    <property type="entry name" value="PA14/GLEYA"/>
</dbReference>
<dbReference type="InterPro" id="IPR011658">
    <property type="entry name" value="PA14_dom"/>
</dbReference>
<dbReference type="PANTHER" id="PTHR42715">
    <property type="entry name" value="BETA-GLUCOSIDASE"/>
    <property type="match status" value="1"/>
</dbReference>
<dbReference type="PANTHER" id="PTHR42715:SF27">
    <property type="entry name" value="BETA-GLUCOSIDASE-RELATED"/>
    <property type="match status" value="1"/>
</dbReference>
<dbReference type="Pfam" id="PF14310">
    <property type="entry name" value="Fn3-like"/>
    <property type="match status" value="1"/>
</dbReference>
<dbReference type="Pfam" id="PF00933">
    <property type="entry name" value="Glyco_hydro_3"/>
    <property type="match status" value="1"/>
</dbReference>
<dbReference type="Pfam" id="PF01915">
    <property type="entry name" value="Glyco_hydro_3_C"/>
    <property type="match status" value="1"/>
</dbReference>
<dbReference type="Pfam" id="PF07691">
    <property type="entry name" value="PA14"/>
    <property type="match status" value="1"/>
</dbReference>
<dbReference type="PRINTS" id="PR00133">
    <property type="entry name" value="GLHYDRLASE3"/>
</dbReference>
<dbReference type="SMART" id="SM01217">
    <property type="entry name" value="Fn3_like"/>
    <property type="match status" value="1"/>
</dbReference>
<dbReference type="SMART" id="SM00758">
    <property type="entry name" value="PA14"/>
    <property type="match status" value="1"/>
</dbReference>
<dbReference type="SUPFAM" id="SSF51445">
    <property type="entry name" value="(Trans)glycosidases"/>
    <property type="match status" value="1"/>
</dbReference>
<dbReference type="SUPFAM" id="SSF52279">
    <property type="entry name" value="Beta-D-glucan exohydrolase, C-terminal domain"/>
    <property type="match status" value="1"/>
</dbReference>
<dbReference type="PROSITE" id="PS00775">
    <property type="entry name" value="GLYCOSYL_HYDROL_F3"/>
    <property type="match status" value="1"/>
</dbReference>
<dbReference type="PROSITE" id="PS51820">
    <property type="entry name" value="PA14"/>
    <property type="match status" value="1"/>
</dbReference>
<protein>
    <recommendedName>
        <fullName>Probable beta-glucosidase I</fullName>
        <ecNumber>3.2.1.21</ecNumber>
    </recommendedName>
    <alternativeName>
        <fullName>Beta-D-glucoside glucohydrolase I</fullName>
    </alternativeName>
    <alternativeName>
        <fullName>Cellobiase I</fullName>
    </alternativeName>
    <alternativeName>
        <fullName>Gentiobiase I</fullName>
    </alternativeName>
</protein>
<keyword id="KW-0119">Carbohydrate metabolism</keyword>
<keyword id="KW-0136">Cellulose degradation</keyword>
<keyword id="KW-0325">Glycoprotein</keyword>
<keyword id="KW-0326">Glycosidase</keyword>
<keyword id="KW-0378">Hydrolase</keyword>
<keyword id="KW-0624">Polysaccharide degradation</keyword>
<keyword id="KW-1185">Reference proteome</keyword>
<keyword id="KW-0964">Secreted</keyword>
<accession>Q2U8Y5</accession>
<feature type="chain" id="PRO_0000394888" description="Probable beta-glucosidase I">
    <location>
        <begin position="1"/>
        <end position="839"/>
    </location>
</feature>
<feature type="domain" description="PA14" evidence="3">
    <location>
        <begin position="395"/>
        <end position="555"/>
    </location>
</feature>
<feature type="active site" evidence="1">
    <location>
        <position position="225"/>
    </location>
</feature>
<feature type="glycosylation site" description="N-linked (GlcNAc...) asparagine" evidence="2">
    <location>
        <position position="197"/>
    </location>
</feature>
<feature type="glycosylation site" description="N-linked (GlcNAc...) asparagine" evidence="2">
    <location>
        <position position="620"/>
    </location>
</feature>
<comment type="function">
    <text evidence="1">Beta-glucosidases are one of a number of cellulolytic enzymes involved in the degradation of cellulosic biomass. Catalyzes the last step releasing glucose from the inhibitory cellobiose (By similarity).</text>
</comment>
<comment type="catalytic activity">
    <reaction>
        <text>Hydrolysis of terminal, non-reducing beta-D-glucosyl residues with release of beta-D-glucose.</text>
        <dbReference type="EC" id="3.2.1.21"/>
    </reaction>
</comment>
<comment type="pathway">
    <text>Glycan metabolism; cellulose degradation.</text>
</comment>
<comment type="subcellular location">
    <subcellularLocation>
        <location evidence="1">Secreted</location>
    </subcellularLocation>
</comment>
<comment type="similarity">
    <text evidence="4">Belongs to the glycosyl hydrolase 3 family.</text>
</comment>
<evidence type="ECO:0000250" key="1"/>
<evidence type="ECO:0000255" key="2"/>
<evidence type="ECO:0000255" key="3">
    <source>
        <dbReference type="PROSITE-ProRule" id="PRU01164"/>
    </source>
</evidence>
<evidence type="ECO:0000305" key="4"/>